<gene>
    <name evidence="1" type="primary">leuS</name>
    <name type="ordered locus">Daro_0544</name>
</gene>
<organism>
    <name type="scientific">Dechloromonas aromatica (strain RCB)</name>
    <dbReference type="NCBI Taxonomy" id="159087"/>
    <lineage>
        <taxon>Bacteria</taxon>
        <taxon>Pseudomonadati</taxon>
        <taxon>Pseudomonadota</taxon>
        <taxon>Betaproteobacteria</taxon>
        <taxon>Rhodocyclales</taxon>
        <taxon>Azonexaceae</taxon>
        <taxon>Dechloromonas</taxon>
    </lineage>
</organism>
<dbReference type="EC" id="6.1.1.4" evidence="1"/>
<dbReference type="EMBL" id="CP000089">
    <property type="protein sequence ID" value="AAZ45301.1"/>
    <property type="status" value="ALT_INIT"/>
    <property type="molecule type" value="Genomic_DNA"/>
</dbReference>
<dbReference type="SMR" id="Q47IN0"/>
<dbReference type="STRING" id="159087.Daro_0544"/>
<dbReference type="KEGG" id="dar:Daro_0544"/>
<dbReference type="eggNOG" id="COG0495">
    <property type="taxonomic scope" value="Bacteria"/>
</dbReference>
<dbReference type="HOGENOM" id="CLU_004427_0_0_4"/>
<dbReference type="OrthoDB" id="9810365at2"/>
<dbReference type="GO" id="GO:0005829">
    <property type="term" value="C:cytosol"/>
    <property type="evidence" value="ECO:0007669"/>
    <property type="project" value="TreeGrafter"/>
</dbReference>
<dbReference type="GO" id="GO:0002161">
    <property type="term" value="F:aminoacyl-tRNA deacylase activity"/>
    <property type="evidence" value="ECO:0007669"/>
    <property type="project" value="InterPro"/>
</dbReference>
<dbReference type="GO" id="GO:0005524">
    <property type="term" value="F:ATP binding"/>
    <property type="evidence" value="ECO:0007669"/>
    <property type="project" value="UniProtKB-UniRule"/>
</dbReference>
<dbReference type="GO" id="GO:0004823">
    <property type="term" value="F:leucine-tRNA ligase activity"/>
    <property type="evidence" value="ECO:0007669"/>
    <property type="project" value="UniProtKB-UniRule"/>
</dbReference>
<dbReference type="GO" id="GO:0006429">
    <property type="term" value="P:leucyl-tRNA aminoacylation"/>
    <property type="evidence" value="ECO:0007669"/>
    <property type="project" value="UniProtKB-UniRule"/>
</dbReference>
<dbReference type="CDD" id="cd07958">
    <property type="entry name" value="Anticodon_Ia_Leu_BEm"/>
    <property type="match status" value="1"/>
</dbReference>
<dbReference type="CDD" id="cd00812">
    <property type="entry name" value="LeuRS_core"/>
    <property type="match status" value="1"/>
</dbReference>
<dbReference type="FunFam" id="1.10.730.10:FF:000003">
    <property type="entry name" value="Leucine--tRNA ligase"/>
    <property type="match status" value="1"/>
</dbReference>
<dbReference type="FunFam" id="2.20.28.290:FF:000001">
    <property type="entry name" value="Leucine--tRNA ligase"/>
    <property type="match status" value="1"/>
</dbReference>
<dbReference type="FunFam" id="3.10.20.590:FF:000001">
    <property type="entry name" value="Leucine--tRNA ligase"/>
    <property type="match status" value="1"/>
</dbReference>
<dbReference type="FunFam" id="3.40.50.620:FF:000003">
    <property type="entry name" value="Leucine--tRNA ligase"/>
    <property type="match status" value="1"/>
</dbReference>
<dbReference type="FunFam" id="3.90.740.10:FF:000012">
    <property type="entry name" value="Leucine--tRNA ligase"/>
    <property type="match status" value="1"/>
</dbReference>
<dbReference type="Gene3D" id="2.20.28.290">
    <property type="match status" value="1"/>
</dbReference>
<dbReference type="Gene3D" id="3.10.20.590">
    <property type="match status" value="1"/>
</dbReference>
<dbReference type="Gene3D" id="3.40.50.620">
    <property type="entry name" value="HUPs"/>
    <property type="match status" value="2"/>
</dbReference>
<dbReference type="Gene3D" id="1.10.730.10">
    <property type="entry name" value="Isoleucyl-tRNA Synthetase, Domain 1"/>
    <property type="match status" value="1"/>
</dbReference>
<dbReference type="Gene3D" id="3.90.740.10">
    <property type="entry name" value="Valyl/Leucyl/Isoleucyl-tRNA synthetase, editing domain"/>
    <property type="match status" value="1"/>
</dbReference>
<dbReference type="HAMAP" id="MF_00049_B">
    <property type="entry name" value="Leu_tRNA_synth_B"/>
    <property type="match status" value="1"/>
</dbReference>
<dbReference type="InterPro" id="IPR001412">
    <property type="entry name" value="aa-tRNA-synth_I_CS"/>
</dbReference>
<dbReference type="InterPro" id="IPR002300">
    <property type="entry name" value="aa-tRNA-synth_Ia"/>
</dbReference>
<dbReference type="InterPro" id="IPR002302">
    <property type="entry name" value="Leu-tRNA-ligase"/>
</dbReference>
<dbReference type="InterPro" id="IPR025709">
    <property type="entry name" value="Leu_tRNA-synth_edit"/>
</dbReference>
<dbReference type="InterPro" id="IPR013155">
    <property type="entry name" value="M/V/L/I-tRNA-synth_anticd-bd"/>
</dbReference>
<dbReference type="InterPro" id="IPR015413">
    <property type="entry name" value="Methionyl/Leucyl_tRNA_Synth"/>
</dbReference>
<dbReference type="InterPro" id="IPR014729">
    <property type="entry name" value="Rossmann-like_a/b/a_fold"/>
</dbReference>
<dbReference type="InterPro" id="IPR009080">
    <property type="entry name" value="tRNAsynth_Ia_anticodon-bd"/>
</dbReference>
<dbReference type="InterPro" id="IPR009008">
    <property type="entry name" value="Val/Leu/Ile-tRNA-synth_edit"/>
</dbReference>
<dbReference type="NCBIfam" id="TIGR00396">
    <property type="entry name" value="leuS_bact"/>
    <property type="match status" value="1"/>
</dbReference>
<dbReference type="PANTHER" id="PTHR43740:SF2">
    <property type="entry name" value="LEUCINE--TRNA LIGASE, MITOCHONDRIAL"/>
    <property type="match status" value="1"/>
</dbReference>
<dbReference type="PANTHER" id="PTHR43740">
    <property type="entry name" value="LEUCYL-TRNA SYNTHETASE"/>
    <property type="match status" value="1"/>
</dbReference>
<dbReference type="Pfam" id="PF08264">
    <property type="entry name" value="Anticodon_1"/>
    <property type="match status" value="1"/>
</dbReference>
<dbReference type="Pfam" id="PF00133">
    <property type="entry name" value="tRNA-synt_1"/>
    <property type="match status" value="2"/>
</dbReference>
<dbReference type="Pfam" id="PF13603">
    <property type="entry name" value="tRNA-synt_1_2"/>
    <property type="match status" value="1"/>
</dbReference>
<dbReference type="Pfam" id="PF09334">
    <property type="entry name" value="tRNA-synt_1g"/>
    <property type="match status" value="1"/>
</dbReference>
<dbReference type="PRINTS" id="PR00985">
    <property type="entry name" value="TRNASYNTHLEU"/>
</dbReference>
<dbReference type="SUPFAM" id="SSF47323">
    <property type="entry name" value="Anticodon-binding domain of a subclass of class I aminoacyl-tRNA synthetases"/>
    <property type="match status" value="1"/>
</dbReference>
<dbReference type="SUPFAM" id="SSF52374">
    <property type="entry name" value="Nucleotidylyl transferase"/>
    <property type="match status" value="1"/>
</dbReference>
<dbReference type="SUPFAM" id="SSF50677">
    <property type="entry name" value="ValRS/IleRS/LeuRS editing domain"/>
    <property type="match status" value="1"/>
</dbReference>
<dbReference type="PROSITE" id="PS00178">
    <property type="entry name" value="AA_TRNA_LIGASE_I"/>
    <property type="match status" value="1"/>
</dbReference>
<keyword id="KW-0030">Aminoacyl-tRNA synthetase</keyword>
<keyword id="KW-0067">ATP-binding</keyword>
<keyword id="KW-0963">Cytoplasm</keyword>
<keyword id="KW-0436">Ligase</keyword>
<keyword id="KW-0547">Nucleotide-binding</keyword>
<keyword id="KW-0648">Protein biosynthesis</keyword>
<sequence>MQDKYTPADIERAAQQHWDKTGAARAVEDATKPKYYCLSMFPYPSGKLHMGHVRNYTIGDVLSRFHKMQGYNVLQPMGWDAFGMPAENAALQNNVPPAGWTYSNIDYMRQQLKSLGFAIDWEREFATCTPEYYRWEQWLFTRLYEKGLVYKKLGTVNWDPVDHTVLANEQVIDGRGWRSGALIEKREIPMYYMKITAYAEELLSELDNLPGWPEQVRLMQKNWIGKSTGVRFAFPLADNPDEKLWVFTTRADTIMGVTFVAVAAEHPLATKAAANNPELAAFIEECKKGGVAEADIATMEKKGMPTGIYVTHPLTGQQVEVWVGNYVLMSYGDGAVMAVPAHDERDFAFALKYNLPIKQVVAVDGETAFSHEAWAEWYADKAKGKLVNSGKYDGLGYEAAVDAIAADLAAKNLGDKKVQFRLRDWGISRQRYWGCPIPIIHCKTCGDVPVPDDQLPVVLPENVEITGAGSPLAKMPEFYECQCPKCGGDARRETDTMDTFFESSWYFLRYACPDNTTAMVDERVAYWCKGGIDQYIGGIEHAILHLLYSRFFTKLMRDVGLIGDLGEPFANLLTQGMVVAPTFYRELDGGKKQWINPADVDVVTDERGRPTGATLKTDGLPVVIGGTEKMSKSKNNGVDPQALIDQYGADTARLFIMFASPPDQSLEWSDAGVEGAYRFLRRLWKTTYDHLQAGLVAASTSNDGLSSAQADLRRKLHQTMGKVADDYGRRKQFNTAIAAVMELLNAYDKCDLKDAAGRALAQESLESIALLLFPIVPHIGQALYAQLRPGADAGNAAFPKADPAALKQDEIELMVQVNGKLRGAIRVSAEADKATIEATALANEDAIKFMEGKPAKKVIVVPGRLVNIVA</sequence>
<proteinExistence type="inferred from homology"/>
<evidence type="ECO:0000255" key="1">
    <source>
        <dbReference type="HAMAP-Rule" id="MF_00049"/>
    </source>
</evidence>
<evidence type="ECO:0000305" key="2"/>
<protein>
    <recommendedName>
        <fullName evidence="1">Leucine--tRNA ligase</fullName>
        <ecNumber evidence="1">6.1.1.4</ecNumber>
    </recommendedName>
    <alternativeName>
        <fullName evidence="1">Leucyl-tRNA synthetase</fullName>
        <shortName evidence="1">LeuRS</shortName>
    </alternativeName>
</protein>
<reference key="1">
    <citation type="journal article" date="2009" name="BMC Genomics">
        <title>Metabolic analysis of the soil microbe Dechloromonas aromatica str. RCB: indications of a surprisingly complex life-style and cryptic anaerobic pathways for aromatic degradation.</title>
        <authorList>
            <person name="Salinero K.K."/>
            <person name="Keller K."/>
            <person name="Feil W.S."/>
            <person name="Feil H."/>
            <person name="Trong S."/>
            <person name="Di Bartolo G."/>
            <person name="Lapidus A."/>
        </authorList>
    </citation>
    <scope>NUCLEOTIDE SEQUENCE [LARGE SCALE GENOMIC DNA]</scope>
    <source>
        <strain>RCB</strain>
    </source>
</reference>
<name>SYL_DECAR</name>
<comment type="catalytic activity">
    <reaction evidence="1">
        <text>tRNA(Leu) + L-leucine + ATP = L-leucyl-tRNA(Leu) + AMP + diphosphate</text>
        <dbReference type="Rhea" id="RHEA:11688"/>
        <dbReference type="Rhea" id="RHEA-COMP:9613"/>
        <dbReference type="Rhea" id="RHEA-COMP:9622"/>
        <dbReference type="ChEBI" id="CHEBI:30616"/>
        <dbReference type="ChEBI" id="CHEBI:33019"/>
        <dbReference type="ChEBI" id="CHEBI:57427"/>
        <dbReference type="ChEBI" id="CHEBI:78442"/>
        <dbReference type="ChEBI" id="CHEBI:78494"/>
        <dbReference type="ChEBI" id="CHEBI:456215"/>
        <dbReference type="EC" id="6.1.1.4"/>
    </reaction>
</comment>
<comment type="subcellular location">
    <subcellularLocation>
        <location evidence="1">Cytoplasm</location>
    </subcellularLocation>
</comment>
<comment type="similarity">
    <text evidence="1">Belongs to the class-I aminoacyl-tRNA synthetase family.</text>
</comment>
<comment type="sequence caution" evidence="2">
    <conflict type="erroneous initiation">
        <sequence resource="EMBL-CDS" id="AAZ45301"/>
    </conflict>
</comment>
<accession>Q47IN0</accession>
<feature type="chain" id="PRO_0000334747" description="Leucine--tRNA ligase">
    <location>
        <begin position="1"/>
        <end position="870"/>
    </location>
</feature>
<feature type="short sequence motif" description="'HIGH' region">
    <location>
        <begin position="42"/>
        <end position="52"/>
    </location>
</feature>
<feature type="short sequence motif" description="'KMSKS' region">
    <location>
        <begin position="629"/>
        <end position="633"/>
    </location>
</feature>
<feature type="binding site" evidence="1">
    <location>
        <position position="632"/>
    </location>
    <ligand>
        <name>ATP</name>
        <dbReference type="ChEBI" id="CHEBI:30616"/>
    </ligand>
</feature>